<comment type="subcellular location">
    <subcellularLocation>
        <location>Cytoplasm</location>
    </subcellularLocation>
    <subcellularLocation>
        <location evidence="1">Cell inner membrane</location>
        <topology evidence="1">Peripheral membrane protein</topology>
        <orientation evidence="1">Cytoplasmic side</orientation>
    </subcellularLocation>
</comment>
<comment type="similarity">
    <text evidence="1">Belongs to the HflD family.</text>
</comment>
<keyword id="KW-0997">Cell inner membrane</keyword>
<keyword id="KW-1003">Cell membrane</keyword>
<keyword id="KW-0963">Cytoplasm</keyword>
<keyword id="KW-0472">Membrane</keyword>
<evidence type="ECO:0000255" key="1">
    <source>
        <dbReference type="HAMAP-Rule" id="MF_00695"/>
    </source>
</evidence>
<feature type="chain" id="PRO_1000062050" description="High frequency lysogenization protein HflD homolog">
    <location>
        <begin position="1"/>
        <end position="206"/>
    </location>
</feature>
<gene>
    <name evidence="1" type="primary">hflD</name>
    <name type="ordered locus">PSPA7_2580</name>
</gene>
<dbReference type="EMBL" id="CP000744">
    <property type="protein sequence ID" value="ABR83489.1"/>
    <property type="molecule type" value="Genomic_DNA"/>
</dbReference>
<dbReference type="RefSeq" id="WP_012075451.1">
    <property type="nucleotide sequence ID" value="NC_009656.1"/>
</dbReference>
<dbReference type="SMR" id="A6V4F9"/>
<dbReference type="KEGG" id="pap:PSPA7_2580"/>
<dbReference type="HOGENOM" id="CLU_098920_0_0_6"/>
<dbReference type="Proteomes" id="UP000001582">
    <property type="component" value="Chromosome"/>
</dbReference>
<dbReference type="GO" id="GO:0005737">
    <property type="term" value="C:cytoplasm"/>
    <property type="evidence" value="ECO:0007669"/>
    <property type="project" value="UniProtKB-SubCell"/>
</dbReference>
<dbReference type="GO" id="GO:0005886">
    <property type="term" value="C:plasma membrane"/>
    <property type="evidence" value="ECO:0007669"/>
    <property type="project" value="UniProtKB-SubCell"/>
</dbReference>
<dbReference type="Gene3D" id="1.10.3890.10">
    <property type="entry name" value="HflD-like"/>
    <property type="match status" value="1"/>
</dbReference>
<dbReference type="HAMAP" id="MF_00695">
    <property type="entry name" value="HflD_protein"/>
    <property type="match status" value="1"/>
</dbReference>
<dbReference type="InterPro" id="IPR007451">
    <property type="entry name" value="HflD"/>
</dbReference>
<dbReference type="InterPro" id="IPR035932">
    <property type="entry name" value="HflD-like_sf"/>
</dbReference>
<dbReference type="NCBIfam" id="NF001246">
    <property type="entry name" value="PRK00218.1-2"/>
    <property type="match status" value="1"/>
</dbReference>
<dbReference type="NCBIfam" id="NF001247">
    <property type="entry name" value="PRK00218.1-3"/>
    <property type="match status" value="1"/>
</dbReference>
<dbReference type="PANTHER" id="PTHR38100">
    <property type="entry name" value="HIGH FREQUENCY LYSOGENIZATION PROTEIN HFLD"/>
    <property type="match status" value="1"/>
</dbReference>
<dbReference type="PANTHER" id="PTHR38100:SF1">
    <property type="entry name" value="HIGH FREQUENCY LYSOGENIZATION PROTEIN HFLD"/>
    <property type="match status" value="1"/>
</dbReference>
<dbReference type="Pfam" id="PF04356">
    <property type="entry name" value="DUF489"/>
    <property type="match status" value="1"/>
</dbReference>
<dbReference type="SUPFAM" id="SSF101322">
    <property type="entry name" value="YcfC-like"/>
    <property type="match status" value="1"/>
</dbReference>
<proteinExistence type="inferred from homology"/>
<organism>
    <name type="scientific">Pseudomonas paraeruginosa (strain DSM 24068 / PA7)</name>
    <name type="common">Pseudomonas aeruginosa (strain PA7)</name>
    <dbReference type="NCBI Taxonomy" id="381754"/>
    <lineage>
        <taxon>Bacteria</taxon>
        <taxon>Pseudomonadati</taxon>
        <taxon>Pseudomonadota</taxon>
        <taxon>Gammaproteobacteria</taxon>
        <taxon>Pseudomonadales</taxon>
        <taxon>Pseudomonadaceae</taxon>
        <taxon>Pseudomonas</taxon>
        <taxon>Pseudomonas paraeruginosa</taxon>
    </lineage>
</organism>
<sequence length="206" mass="23083">MSDSRQQLIALGAVFESAALVDKLARTGQISEAPLGCMLGSLLARNPASTLDVYGGDTLNLRDGFKALASALERKPGSLQREPLRYALAMLTLERQLDKRGDMLDLIGQRLDQVEQQVQHFGLVHENVIASFASIYQDTLSTFRQRIQVHGDMRHLQVSSNAARIRALLLAGIRSARLWRQLGGSRWQMVFSRRRLLNELYLLLRG</sequence>
<reference key="1">
    <citation type="submission" date="2007-06" db="EMBL/GenBank/DDBJ databases">
        <authorList>
            <person name="Dodson R.J."/>
            <person name="Harkins D."/>
            <person name="Paulsen I.T."/>
        </authorList>
    </citation>
    <scope>NUCLEOTIDE SEQUENCE [LARGE SCALE GENOMIC DNA]</scope>
    <source>
        <strain>DSM 24068 / PA7</strain>
    </source>
</reference>
<name>HFLD_PSEP7</name>
<accession>A6V4F9</accession>
<protein>
    <recommendedName>
        <fullName evidence="1">High frequency lysogenization protein HflD homolog</fullName>
    </recommendedName>
</protein>